<sequence>MADLSSRVNELHDLLNQYSYEYYVEDNPSVPDSEYDKLLHELIKIEEEHPEYKTVDSPTVRVGGEAQASFNKVNHDTPMLSLGNAFNEDDLRKFDQRIREQIGNVEYMCELKIDGLAVSLKYVDGYFVQGLTRGDGTTGEDITENLKTIHAIPLKMKEPLNVEVRGEAYMPRRSFLRLNEEKEKNDEQLFANPRNAAAGSLRQLDSKLTAKRKLSVFIYSVNDFTDFNARSQSEALDELDKLGFTTNKNRARVNNIDGVLEYIEKWTSQRESLPYDIDGIVIKVNDLDQQDEMGFTQKSPRWAIAYKFPAEEVVTKLLDIELSIGRTGVVTPTAILEPVKVAGTTVSRASLHNEDLIHDRDIRIGDSVVVKKAGDIIPEVVRSIPERRPEDAVTYHMPTHCPSCGHELVRIEGEVALRCINPKCQAQLVEGLIHFVSRQAMNIDGLGTKIIQQLYQSELIKDVADIFYLTEEDLLPLDRMGQKKVDNLLAAIQQAKDNSLENLLFGLGIRHLGVKASQVLAEKYETIDRLLTVTEAELVEIHDIGDKVAQSVVTYLENEDIRALIQKLKDKHVNMIYKGIKTSDIEGHPEFSGKTIVLTGKLHQMTRNEASKWLASQGAKVTSSVTKNTDVVIAGEDAGSKLTKAQSLGIEIWTEQQFVDKQNELNS</sequence>
<dbReference type="EC" id="6.5.1.2" evidence="1"/>
<dbReference type="EMBL" id="BA000033">
    <property type="protein sequence ID" value="BAB95710.1"/>
    <property type="molecule type" value="Genomic_DNA"/>
</dbReference>
<dbReference type="RefSeq" id="WP_000774565.1">
    <property type="nucleotide sequence ID" value="NC_003923.1"/>
</dbReference>
<dbReference type="SMR" id="Q7A0H1"/>
<dbReference type="KEGG" id="sam:MW1845"/>
<dbReference type="HOGENOM" id="CLU_007764_2_1_9"/>
<dbReference type="GO" id="GO:0005829">
    <property type="term" value="C:cytosol"/>
    <property type="evidence" value="ECO:0007669"/>
    <property type="project" value="TreeGrafter"/>
</dbReference>
<dbReference type="GO" id="GO:0003677">
    <property type="term" value="F:DNA binding"/>
    <property type="evidence" value="ECO:0007669"/>
    <property type="project" value="InterPro"/>
</dbReference>
<dbReference type="GO" id="GO:0003911">
    <property type="term" value="F:DNA ligase (NAD+) activity"/>
    <property type="evidence" value="ECO:0007669"/>
    <property type="project" value="UniProtKB-UniRule"/>
</dbReference>
<dbReference type="GO" id="GO:0046872">
    <property type="term" value="F:metal ion binding"/>
    <property type="evidence" value="ECO:0007669"/>
    <property type="project" value="UniProtKB-KW"/>
</dbReference>
<dbReference type="GO" id="GO:0006281">
    <property type="term" value="P:DNA repair"/>
    <property type="evidence" value="ECO:0007669"/>
    <property type="project" value="UniProtKB-KW"/>
</dbReference>
<dbReference type="GO" id="GO:0006260">
    <property type="term" value="P:DNA replication"/>
    <property type="evidence" value="ECO:0007669"/>
    <property type="project" value="UniProtKB-KW"/>
</dbReference>
<dbReference type="CDD" id="cd17748">
    <property type="entry name" value="BRCT_DNA_ligase_like"/>
    <property type="match status" value="1"/>
</dbReference>
<dbReference type="CDD" id="cd00114">
    <property type="entry name" value="LIGANc"/>
    <property type="match status" value="1"/>
</dbReference>
<dbReference type="FunFam" id="1.10.150.20:FF:000006">
    <property type="entry name" value="DNA ligase"/>
    <property type="match status" value="1"/>
</dbReference>
<dbReference type="FunFam" id="1.10.150.20:FF:000007">
    <property type="entry name" value="DNA ligase"/>
    <property type="match status" value="1"/>
</dbReference>
<dbReference type="FunFam" id="1.10.287.610:FF:000005">
    <property type="entry name" value="DNA ligase"/>
    <property type="match status" value="1"/>
</dbReference>
<dbReference type="FunFam" id="2.40.50.140:FF:000012">
    <property type="entry name" value="DNA ligase"/>
    <property type="match status" value="1"/>
</dbReference>
<dbReference type="FunFam" id="3.30.470.30:FF:000001">
    <property type="entry name" value="DNA ligase"/>
    <property type="match status" value="1"/>
</dbReference>
<dbReference type="FunFam" id="3.40.50.10190:FF:000045">
    <property type="entry name" value="DNA ligase"/>
    <property type="match status" value="1"/>
</dbReference>
<dbReference type="FunFam" id="6.20.10.30:FF:000002">
    <property type="entry name" value="DNA ligase"/>
    <property type="match status" value="1"/>
</dbReference>
<dbReference type="Gene3D" id="6.20.10.30">
    <property type="match status" value="1"/>
</dbReference>
<dbReference type="Gene3D" id="1.10.150.20">
    <property type="entry name" value="5' to 3' exonuclease, C-terminal subdomain"/>
    <property type="match status" value="2"/>
</dbReference>
<dbReference type="Gene3D" id="3.40.50.10190">
    <property type="entry name" value="BRCT domain"/>
    <property type="match status" value="1"/>
</dbReference>
<dbReference type="Gene3D" id="3.30.470.30">
    <property type="entry name" value="DNA ligase/mRNA capping enzyme"/>
    <property type="match status" value="1"/>
</dbReference>
<dbReference type="Gene3D" id="1.10.287.610">
    <property type="entry name" value="Helix hairpin bin"/>
    <property type="match status" value="1"/>
</dbReference>
<dbReference type="Gene3D" id="2.40.50.140">
    <property type="entry name" value="Nucleic acid-binding proteins"/>
    <property type="match status" value="1"/>
</dbReference>
<dbReference type="HAMAP" id="MF_01588">
    <property type="entry name" value="DNA_ligase_A"/>
    <property type="match status" value="1"/>
</dbReference>
<dbReference type="InterPro" id="IPR001357">
    <property type="entry name" value="BRCT_dom"/>
</dbReference>
<dbReference type="InterPro" id="IPR036420">
    <property type="entry name" value="BRCT_dom_sf"/>
</dbReference>
<dbReference type="InterPro" id="IPR041663">
    <property type="entry name" value="DisA/LigA_HHH"/>
</dbReference>
<dbReference type="InterPro" id="IPR001679">
    <property type="entry name" value="DNA_ligase"/>
</dbReference>
<dbReference type="InterPro" id="IPR018239">
    <property type="entry name" value="DNA_ligase_AS"/>
</dbReference>
<dbReference type="InterPro" id="IPR033136">
    <property type="entry name" value="DNA_ligase_CS"/>
</dbReference>
<dbReference type="InterPro" id="IPR013839">
    <property type="entry name" value="DNAligase_adenylation"/>
</dbReference>
<dbReference type="InterPro" id="IPR013840">
    <property type="entry name" value="DNAligase_N"/>
</dbReference>
<dbReference type="InterPro" id="IPR003583">
    <property type="entry name" value="Hlx-hairpin-Hlx_DNA-bd_motif"/>
</dbReference>
<dbReference type="InterPro" id="IPR012340">
    <property type="entry name" value="NA-bd_OB-fold"/>
</dbReference>
<dbReference type="InterPro" id="IPR004150">
    <property type="entry name" value="NAD_DNA_ligase_OB"/>
</dbReference>
<dbReference type="InterPro" id="IPR010994">
    <property type="entry name" value="RuvA_2-like"/>
</dbReference>
<dbReference type="InterPro" id="IPR004149">
    <property type="entry name" value="Znf_DNAligase_C4"/>
</dbReference>
<dbReference type="NCBIfam" id="TIGR00575">
    <property type="entry name" value="dnlj"/>
    <property type="match status" value="1"/>
</dbReference>
<dbReference type="NCBIfam" id="NF005932">
    <property type="entry name" value="PRK07956.1"/>
    <property type="match status" value="1"/>
</dbReference>
<dbReference type="PANTHER" id="PTHR23389">
    <property type="entry name" value="CHROMOSOME TRANSMISSION FIDELITY FACTOR 18"/>
    <property type="match status" value="1"/>
</dbReference>
<dbReference type="PANTHER" id="PTHR23389:SF9">
    <property type="entry name" value="DNA LIGASE"/>
    <property type="match status" value="1"/>
</dbReference>
<dbReference type="Pfam" id="PF00533">
    <property type="entry name" value="BRCT"/>
    <property type="match status" value="1"/>
</dbReference>
<dbReference type="Pfam" id="PF01653">
    <property type="entry name" value="DNA_ligase_aden"/>
    <property type="match status" value="1"/>
</dbReference>
<dbReference type="Pfam" id="PF03120">
    <property type="entry name" value="DNA_ligase_OB"/>
    <property type="match status" value="1"/>
</dbReference>
<dbReference type="Pfam" id="PF03119">
    <property type="entry name" value="DNA_ligase_ZBD"/>
    <property type="match status" value="1"/>
</dbReference>
<dbReference type="Pfam" id="PF12826">
    <property type="entry name" value="HHH_2"/>
    <property type="match status" value="1"/>
</dbReference>
<dbReference type="PIRSF" id="PIRSF001604">
    <property type="entry name" value="LigA"/>
    <property type="match status" value="1"/>
</dbReference>
<dbReference type="SMART" id="SM00292">
    <property type="entry name" value="BRCT"/>
    <property type="match status" value="1"/>
</dbReference>
<dbReference type="SMART" id="SM00278">
    <property type="entry name" value="HhH1"/>
    <property type="match status" value="3"/>
</dbReference>
<dbReference type="SMART" id="SM00532">
    <property type="entry name" value="LIGANc"/>
    <property type="match status" value="1"/>
</dbReference>
<dbReference type="SUPFAM" id="SSF52113">
    <property type="entry name" value="BRCT domain"/>
    <property type="match status" value="1"/>
</dbReference>
<dbReference type="SUPFAM" id="SSF56091">
    <property type="entry name" value="DNA ligase/mRNA capping enzyme, catalytic domain"/>
    <property type="match status" value="1"/>
</dbReference>
<dbReference type="SUPFAM" id="SSF50249">
    <property type="entry name" value="Nucleic acid-binding proteins"/>
    <property type="match status" value="1"/>
</dbReference>
<dbReference type="SUPFAM" id="SSF47781">
    <property type="entry name" value="RuvA domain 2-like"/>
    <property type="match status" value="1"/>
</dbReference>
<dbReference type="PROSITE" id="PS50172">
    <property type="entry name" value="BRCT"/>
    <property type="match status" value="1"/>
</dbReference>
<dbReference type="PROSITE" id="PS01055">
    <property type="entry name" value="DNA_LIGASE_N1"/>
    <property type="match status" value="1"/>
</dbReference>
<dbReference type="PROSITE" id="PS01056">
    <property type="entry name" value="DNA_LIGASE_N2"/>
    <property type="match status" value="1"/>
</dbReference>
<protein>
    <recommendedName>
        <fullName evidence="1">DNA ligase</fullName>
        <ecNumber evidence="1">6.5.1.2</ecNumber>
    </recommendedName>
    <alternativeName>
        <fullName evidence="1">Polydeoxyribonucleotide synthase [NAD(+)]</fullName>
    </alternativeName>
</protein>
<reference key="1">
    <citation type="journal article" date="2002" name="Lancet">
        <title>Genome and virulence determinants of high virulence community-acquired MRSA.</title>
        <authorList>
            <person name="Baba T."/>
            <person name="Takeuchi F."/>
            <person name="Kuroda M."/>
            <person name="Yuzawa H."/>
            <person name="Aoki K."/>
            <person name="Oguchi A."/>
            <person name="Nagai Y."/>
            <person name="Iwama N."/>
            <person name="Asano K."/>
            <person name="Naimi T."/>
            <person name="Kuroda H."/>
            <person name="Cui L."/>
            <person name="Yamamoto K."/>
            <person name="Hiramatsu K."/>
        </authorList>
    </citation>
    <scope>NUCLEOTIDE SEQUENCE [LARGE SCALE GENOMIC DNA]</scope>
    <source>
        <strain>MW2</strain>
    </source>
</reference>
<name>DNLJ_STAAW</name>
<accession>Q7A0H1</accession>
<keyword id="KW-0227">DNA damage</keyword>
<keyword id="KW-0234">DNA repair</keyword>
<keyword id="KW-0235">DNA replication</keyword>
<keyword id="KW-0436">Ligase</keyword>
<keyword id="KW-0460">Magnesium</keyword>
<keyword id="KW-0464">Manganese</keyword>
<keyword id="KW-0479">Metal-binding</keyword>
<keyword id="KW-0520">NAD</keyword>
<keyword id="KW-0862">Zinc</keyword>
<organism>
    <name type="scientific">Staphylococcus aureus (strain MW2)</name>
    <dbReference type="NCBI Taxonomy" id="196620"/>
    <lineage>
        <taxon>Bacteria</taxon>
        <taxon>Bacillati</taxon>
        <taxon>Bacillota</taxon>
        <taxon>Bacilli</taxon>
        <taxon>Bacillales</taxon>
        <taxon>Staphylococcaceae</taxon>
        <taxon>Staphylococcus</taxon>
    </lineage>
</organism>
<gene>
    <name evidence="1" type="primary">ligA</name>
    <name type="synonym">lig</name>
    <name type="ordered locus">MW1845</name>
</gene>
<comment type="function">
    <text evidence="1">DNA ligase that catalyzes the formation of phosphodiester linkages between 5'-phosphoryl and 3'-hydroxyl groups in double-stranded DNA using NAD as a coenzyme and as the energy source for the reaction. It is essential for DNA replication and repair of damaged DNA.</text>
</comment>
<comment type="catalytic activity">
    <reaction evidence="1">
        <text>NAD(+) + (deoxyribonucleotide)n-3'-hydroxyl + 5'-phospho-(deoxyribonucleotide)m = (deoxyribonucleotide)n+m + AMP + beta-nicotinamide D-nucleotide.</text>
        <dbReference type="EC" id="6.5.1.2"/>
    </reaction>
</comment>
<comment type="cofactor">
    <cofactor evidence="1">
        <name>Mg(2+)</name>
        <dbReference type="ChEBI" id="CHEBI:18420"/>
    </cofactor>
    <cofactor evidence="1">
        <name>Mn(2+)</name>
        <dbReference type="ChEBI" id="CHEBI:29035"/>
    </cofactor>
</comment>
<comment type="similarity">
    <text evidence="1">Belongs to the NAD-dependent DNA ligase family. LigA subfamily.</text>
</comment>
<evidence type="ECO:0000255" key="1">
    <source>
        <dbReference type="HAMAP-Rule" id="MF_01588"/>
    </source>
</evidence>
<feature type="chain" id="PRO_0000161761" description="DNA ligase">
    <location>
        <begin position="1"/>
        <end position="667"/>
    </location>
</feature>
<feature type="domain" description="BRCT" evidence="1">
    <location>
        <begin position="586"/>
        <end position="667"/>
    </location>
</feature>
<feature type="active site" description="N6-AMP-lysine intermediate" evidence="1">
    <location>
        <position position="112"/>
    </location>
</feature>
<feature type="binding site" evidence="1">
    <location>
        <begin position="32"/>
        <end position="36"/>
    </location>
    <ligand>
        <name>NAD(+)</name>
        <dbReference type="ChEBI" id="CHEBI:57540"/>
    </ligand>
</feature>
<feature type="binding site" evidence="1">
    <location>
        <begin position="81"/>
        <end position="82"/>
    </location>
    <ligand>
        <name>NAD(+)</name>
        <dbReference type="ChEBI" id="CHEBI:57540"/>
    </ligand>
</feature>
<feature type="binding site" evidence="1">
    <location>
        <position position="110"/>
    </location>
    <ligand>
        <name>NAD(+)</name>
        <dbReference type="ChEBI" id="CHEBI:57540"/>
    </ligand>
</feature>
<feature type="binding site" evidence="1">
    <location>
        <position position="133"/>
    </location>
    <ligand>
        <name>NAD(+)</name>
        <dbReference type="ChEBI" id="CHEBI:57540"/>
    </ligand>
</feature>
<feature type="binding site" evidence="1">
    <location>
        <position position="167"/>
    </location>
    <ligand>
        <name>NAD(+)</name>
        <dbReference type="ChEBI" id="CHEBI:57540"/>
    </ligand>
</feature>
<feature type="binding site" evidence="1">
    <location>
        <position position="283"/>
    </location>
    <ligand>
        <name>NAD(+)</name>
        <dbReference type="ChEBI" id="CHEBI:57540"/>
    </ligand>
</feature>
<feature type="binding site" evidence="1">
    <location>
        <position position="307"/>
    </location>
    <ligand>
        <name>NAD(+)</name>
        <dbReference type="ChEBI" id="CHEBI:57540"/>
    </ligand>
</feature>
<feature type="binding site" evidence="1">
    <location>
        <position position="401"/>
    </location>
    <ligand>
        <name>Zn(2+)</name>
        <dbReference type="ChEBI" id="CHEBI:29105"/>
    </ligand>
</feature>
<feature type="binding site" evidence="1">
    <location>
        <position position="404"/>
    </location>
    <ligand>
        <name>Zn(2+)</name>
        <dbReference type="ChEBI" id="CHEBI:29105"/>
    </ligand>
</feature>
<feature type="binding site" evidence="1">
    <location>
        <position position="419"/>
    </location>
    <ligand>
        <name>Zn(2+)</name>
        <dbReference type="ChEBI" id="CHEBI:29105"/>
    </ligand>
</feature>
<feature type="binding site" evidence="1">
    <location>
        <position position="424"/>
    </location>
    <ligand>
        <name>Zn(2+)</name>
        <dbReference type="ChEBI" id="CHEBI:29105"/>
    </ligand>
</feature>
<proteinExistence type="inferred from homology"/>